<name>ARF5_ARATH</name>
<accession>Q9ZPX1</accession>
<accession>Q547H2</accession>
<evidence type="ECO:0000250" key="1"/>
<evidence type="ECO:0000255" key="2"/>
<evidence type="ECO:0000269" key="3">
    <source>
    </source>
</evidence>
<evidence type="ECO:0000269" key="4">
    <source>
    </source>
</evidence>
<evidence type="ECO:0000269" key="5">
    <source>
    </source>
</evidence>
<evidence type="ECO:0000305" key="6"/>
<organism>
    <name type="scientific">Arabidopsis thaliana</name>
    <name type="common">Mouse-ear cress</name>
    <dbReference type="NCBI Taxonomy" id="3702"/>
    <lineage>
        <taxon>Eukaryota</taxon>
        <taxon>Viridiplantae</taxon>
        <taxon>Streptophyta</taxon>
        <taxon>Embryophyta</taxon>
        <taxon>Tracheophyta</taxon>
        <taxon>Spermatophyta</taxon>
        <taxon>Magnoliopsida</taxon>
        <taxon>eudicotyledons</taxon>
        <taxon>Gunneridae</taxon>
        <taxon>Pentapetalae</taxon>
        <taxon>rosids</taxon>
        <taxon>malvids</taxon>
        <taxon>Brassicales</taxon>
        <taxon>Brassicaceae</taxon>
        <taxon>Camelineae</taxon>
        <taxon>Arabidopsis</taxon>
    </lineage>
</organism>
<keyword id="KW-0963">Cytoplasm</keyword>
<keyword id="KW-0342">GTP-binding</keyword>
<keyword id="KW-0449">Lipoprotein</keyword>
<keyword id="KW-0519">Myristate</keyword>
<keyword id="KW-0547">Nucleotide-binding</keyword>
<keyword id="KW-1185">Reference proteome</keyword>
<feature type="initiator methionine" description="Removed" evidence="2">
    <location>
        <position position="1"/>
    </location>
</feature>
<feature type="chain" id="PRO_0000207430" description="ADP-ribosylation factor-like protein 2">
    <location>
        <begin position="2"/>
        <end position="185"/>
    </location>
</feature>
<feature type="binding site" evidence="1">
    <location>
        <begin position="23"/>
        <end position="30"/>
    </location>
    <ligand>
        <name>GTP</name>
        <dbReference type="ChEBI" id="CHEBI:37565"/>
    </ligand>
</feature>
<feature type="binding site" evidence="1">
    <location>
        <begin position="66"/>
        <end position="70"/>
    </location>
    <ligand>
        <name>GTP</name>
        <dbReference type="ChEBI" id="CHEBI:37565"/>
    </ligand>
</feature>
<feature type="binding site" evidence="1">
    <location>
        <begin position="125"/>
        <end position="128"/>
    </location>
    <ligand>
        <name>GTP</name>
        <dbReference type="ChEBI" id="CHEBI:37565"/>
    </ligand>
</feature>
<feature type="lipid moiety-binding region" description="N-myristoyl glycine" evidence="2">
    <location>
        <position position="2"/>
    </location>
</feature>
<proteinExistence type="evidence at transcript level"/>
<protein>
    <recommendedName>
        <fullName>ADP-ribosylation factor-like protein 2</fullName>
    </recommendedName>
    <alternativeName>
        <fullName>Protein ARF-like 2</fullName>
    </alternativeName>
    <alternativeName>
        <fullName>Protein HALLIMASCH</fullName>
    </alternativeName>
    <alternativeName>
        <fullName>Protein TITAN 5</fullName>
    </alternativeName>
</protein>
<gene>
    <name type="primary">ARL2</name>
    <name type="synonym">HAL</name>
    <name type="synonym">TTN5</name>
    <name type="ordered locus">At2g18390</name>
    <name type="ORF">T30D6.10</name>
</gene>
<comment type="function">
    <text evidence="3 4 5">Has a role in the cofactor-dependent pathway of microtubule biogenesis. Not essential for cell viability. May play a regulatory role in sequestring TFCD.</text>
</comment>
<comment type="subunit">
    <text evidence="1">Supercomplex made of cofactors A to E. Cofactors A and D function by capturing and stabilizing tubulin in a quasi-native conformation. Cofactor E binds to the cofactor D-tubulin complex; interaction with cofactor C then causes the release of tubulin polypeptides that are committed to the native state (By similarity).</text>
</comment>
<comment type="subcellular location">
    <subcellularLocation>
        <location evidence="6">Cytoplasm</location>
    </subcellularLocation>
</comment>
<comment type="tissue specificity">
    <text evidence="4">Expressed in seedlings, leaves, roots and inflorescences.</text>
</comment>
<comment type="disruption phenotype">
    <text evidence="4 5">Embryo lethality. Embryo development limited to the formation of a few giant cells lacking microtubules but not actin filaments. Failure to localize KNOLLE in mitotic cells. Giant nuclei and nucleoli found in both the embryo and endosperm tissue.</text>
</comment>
<comment type="miscellaneous">
    <text>Belongs to the PILZ group of genes that disrupt, when mutated, the microtubule cytoskeleton and produce mushroom-shaped ('pilz' in German) embryos.</text>
</comment>
<comment type="similarity">
    <text evidence="6">Belongs to the small GTPase superfamily. Arf family.</text>
</comment>
<dbReference type="EMBL" id="AF486852">
    <property type="protein sequence ID" value="AAM22961.1"/>
    <property type="molecule type" value="mRNA"/>
</dbReference>
<dbReference type="EMBL" id="AC006439">
    <property type="protein sequence ID" value="AAD15498.1"/>
    <property type="molecule type" value="Genomic_DNA"/>
</dbReference>
<dbReference type="EMBL" id="CP002685">
    <property type="protein sequence ID" value="AEC06764.1"/>
    <property type="molecule type" value="Genomic_DNA"/>
</dbReference>
<dbReference type="EMBL" id="AY035009">
    <property type="protein sequence ID" value="AAK59514.1"/>
    <property type="molecule type" value="mRNA"/>
</dbReference>
<dbReference type="EMBL" id="AY063048">
    <property type="protein sequence ID" value="AAL34222.1"/>
    <property type="molecule type" value="mRNA"/>
</dbReference>
<dbReference type="EMBL" id="AY088331">
    <property type="protein sequence ID" value="AAM65870.1"/>
    <property type="molecule type" value="mRNA"/>
</dbReference>
<dbReference type="PIR" id="G84563">
    <property type="entry name" value="G84563"/>
</dbReference>
<dbReference type="RefSeq" id="NP_179430.1">
    <property type="nucleotide sequence ID" value="NM_127396.3"/>
</dbReference>
<dbReference type="SMR" id="Q9ZPX1"/>
<dbReference type="FunCoup" id="Q9ZPX1">
    <property type="interactions" value="3365"/>
</dbReference>
<dbReference type="STRING" id="3702.Q9ZPX1"/>
<dbReference type="PaxDb" id="3702-AT2G18390.1"/>
<dbReference type="ProteomicsDB" id="241024"/>
<dbReference type="EnsemblPlants" id="AT2G18390.1">
    <property type="protein sequence ID" value="AT2G18390.1"/>
    <property type="gene ID" value="AT2G18390"/>
</dbReference>
<dbReference type="GeneID" id="816354"/>
<dbReference type="Gramene" id="AT2G18390.1">
    <property type="protein sequence ID" value="AT2G18390.1"/>
    <property type="gene ID" value="AT2G18390"/>
</dbReference>
<dbReference type="KEGG" id="ath:AT2G18390"/>
<dbReference type="Araport" id="AT2G18390"/>
<dbReference type="TAIR" id="AT2G18390">
    <property type="gene designation" value="TTN5"/>
</dbReference>
<dbReference type="eggNOG" id="KOG0073">
    <property type="taxonomic scope" value="Eukaryota"/>
</dbReference>
<dbReference type="HOGENOM" id="CLU_040729_12_3_1"/>
<dbReference type="InParanoid" id="Q9ZPX1"/>
<dbReference type="OMA" id="KTHHWQI"/>
<dbReference type="OrthoDB" id="1056654at2759"/>
<dbReference type="PhylomeDB" id="Q9ZPX1"/>
<dbReference type="PRO" id="PR:Q9ZPX1"/>
<dbReference type="Proteomes" id="UP000006548">
    <property type="component" value="Chromosome 2"/>
</dbReference>
<dbReference type="ExpressionAtlas" id="Q9ZPX1">
    <property type="expression patterns" value="baseline and differential"/>
</dbReference>
<dbReference type="GO" id="GO:0005737">
    <property type="term" value="C:cytoplasm"/>
    <property type="evidence" value="ECO:0007669"/>
    <property type="project" value="UniProtKB-SubCell"/>
</dbReference>
<dbReference type="GO" id="GO:0005525">
    <property type="term" value="F:GTP binding"/>
    <property type="evidence" value="ECO:0000250"/>
    <property type="project" value="TAIR"/>
</dbReference>
<dbReference type="GO" id="GO:0003924">
    <property type="term" value="F:GTPase activity"/>
    <property type="evidence" value="ECO:0007669"/>
    <property type="project" value="InterPro"/>
</dbReference>
<dbReference type="GO" id="GO:0009793">
    <property type="term" value="P:embryo development ending in seed dormancy"/>
    <property type="evidence" value="ECO:0000315"/>
    <property type="project" value="TAIR"/>
</dbReference>
<dbReference type="GO" id="GO:0009558">
    <property type="term" value="P:embryo sac cellularization"/>
    <property type="evidence" value="ECO:0000315"/>
    <property type="project" value="TAIR"/>
</dbReference>
<dbReference type="GO" id="GO:0009960">
    <property type="term" value="P:endosperm development"/>
    <property type="evidence" value="ECO:0000315"/>
    <property type="project" value="TAIR"/>
</dbReference>
<dbReference type="GO" id="GO:0007021">
    <property type="term" value="P:tubulin complex assembly"/>
    <property type="evidence" value="ECO:0000250"/>
    <property type="project" value="TAIR"/>
</dbReference>
<dbReference type="CDD" id="cd04154">
    <property type="entry name" value="Arl2"/>
    <property type="match status" value="1"/>
</dbReference>
<dbReference type="FunFam" id="3.40.50.300:FF:000393">
    <property type="entry name" value="ADP-ribosylation factor-like 2, arl2"/>
    <property type="match status" value="1"/>
</dbReference>
<dbReference type="Gene3D" id="3.40.50.300">
    <property type="entry name" value="P-loop containing nucleotide triphosphate hydrolases"/>
    <property type="match status" value="1"/>
</dbReference>
<dbReference type="InterPro" id="IPR045873">
    <property type="entry name" value="Arl2"/>
</dbReference>
<dbReference type="InterPro" id="IPR044612">
    <property type="entry name" value="ARL2/3"/>
</dbReference>
<dbReference type="InterPro" id="IPR027417">
    <property type="entry name" value="P-loop_NTPase"/>
</dbReference>
<dbReference type="InterPro" id="IPR005225">
    <property type="entry name" value="Small_GTP-bd"/>
</dbReference>
<dbReference type="InterPro" id="IPR006689">
    <property type="entry name" value="Small_GTPase_ARF/SAR"/>
</dbReference>
<dbReference type="NCBIfam" id="TIGR00231">
    <property type="entry name" value="small_GTP"/>
    <property type="match status" value="1"/>
</dbReference>
<dbReference type="PANTHER" id="PTHR45697">
    <property type="entry name" value="ADP-RIBOSYLATION FACTOR-LIKE PROTEIN 2-RELATED"/>
    <property type="match status" value="1"/>
</dbReference>
<dbReference type="Pfam" id="PF00025">
    <property type="entry name" value="Arf"/>
    <property type="match status" value="1"/>
</dbReference>
<dbReference type="PRINTS" id="PR00328">
    <property type="entry name" value="SAR1GTPBP"/>
</dbReference>
<dbReference type="SMART" id="SM00177">
    <property type="entry name" value="ARF"/>
    <property type="match status" value="1"/>
</dbReference>
<dbReference type="SMART" id="SM00178">
    <property type="entry name" value="SAR"/>
    <property type="match status" value="1"/>
</dbReference>
<dbReference type="SUPFAM" id="SSF52540">
    <property type="entry name" value="P-loop containing nucleoside triphosphate hydrolases"/>
    <property type="match status" value="1"/>
</dbReference>
<dbReference type="PROSITE" id="PS51417">
    <property type="entry name" value="ARF"/>
    <property type="match status" value="1"/>
</dbReference>
<sequence>MGLLSIIRKIKKKEKEMRILMVGLDNSGKTTIVLKINGEDTSVISPTLGFNIKTIIYQKYTLNIWDVGGQKTIRSYWRNYFEQTDGLVWVVDSSDLRRLDDCKMELDNLLKEERLAGSSLLILANKQDIQGALTPDEIGKVLNLESMDKSRHWKIVGCSAYTGEGLLEGFDWLVQDIASRIYMLD</sequence>
<reference key="1">
    <citation type="journal article" date="2002" name="Genes Dev.">
        <title>The Arabidopsis PILZ group genes encode tubulin-folding cofactor orthologs required for cell division but not cell growth.</title>
        <authorList>
            <person name="Steinborn K."/>
            <person name="Maulbetsch C."/>
            <person name="Priester B."/>
            <person name="Trautmann S."/>
            <person name="Pacher T."/>
            <person name="Geiges B."/>
            <person name="Kuettner F."/>
            <person name="Lepiniec L."/>
            <person name="Stierhof Y.-D."/>
            <person name="Schwarz H."/>
            <person name="Juergens G."/>
            <person name="Mayer U."/>
        </authorList>
    </citation>
    <scope>NUCLEOTIDE SEQUENCE [MRNA]</scope>
    <scope>FUNCTION</scope>
    <scope>DISRUPTION PHENOTYPE</scope>
    <source>
        <strain>cv. Landsberg erecta</strain>
        <strain>cv. Wassilewskija</strain>
        <tissue>Flower</tissue>
    </source>
</reference>
<reference key="2">
    <citation type="journal article" date="1999" name="Nature">
        <title>Sequence and analysis of chromosome 2 of the plant Arabidopsis thaliana.</title>
        <authorList>
            <person name="Lin X."/>
            <person name="Kaul S."/>
            <person name="Rounsley S.D."/>
            <person name="Shea T.P."/>
            <person name="Benito M.-I."/>
            <person name="Town C.D."/>
            <person name="Fujii C.Y."/>
            <person name="Mason T.M."/>
            <person name="Bowman C.L."/>
            <person name="Barnstead M.E."/>
            <person name="Feldblyum T.V."/>
            <person name="Buell C.R."/>
            <person name="Ketchum K.A."/>
            <person name="Lee J.J."/>
            <person name="Ronning C.M."/>
            <person name="Koo H.L."/>
            <person name="Moffat K.S."/>
            <person name="Cronin L.A."/>
            <person name="Shen M."/>
            <person name="Pai G."/>
            <person name="Van Aken S."/>
            <person name="Umayam L."/>
            <person name="Tallon L.J."/>
            <person name="Gill J.E."/>
            <person name="Adams M.D."/>
            <person name="Carrera A.J."/>
            <person name="Creasy T.H."/>
            <person name="Goodman H.M."/>
            <person name="Somerville C.R."/>
            <person name="Copenhaver G.P."/>
            <person name="Preuss D."/>
            <person name="Nierman W.C."/>
            <person name="White O."/>
            <person name="Eisen J.A."/>
            <person name="Salzberg S.L."/>
            <person name="Fraser C.M."/>
            <person name="Venter J.C."/>
        </authorList>
    </citation>
    <scope>NUCLEOTIDE SEQUENCE [LARGE SCALE GENOMIC DNA]</scope>
    <source>
        <strain>cv. Columbia</strain>
    </source>
</reference>
<reference key="3">
    <citation type="journal article" date="2017" name="Plant J.">
        <title>Araport11: a complete reannotation of the Arabidopsis thaliana reference genome.</title>
        <authorList>
            <person name="Cheng C.Y."/>
            <person name="Krishnakumar V."/>
            <person name="Chan A.P."/>
            <person name="Thibaud-Nissen F."/>
            <person name="Schobel S."/>
            <person name="Town C.D."/>
        </authorList>
    </citation>
    <scope>GENOME REANNOTATION</scope>
    <source>
        <strain>cv. Columbia</strain>
    </source>
</reference>
<reference key="4">
    <citation type="journal article" date="2003" name="Science">
        <title>Empirical analysis of transcriptional activity in the Arabidopsis genome.</title>
        <authorList>
            <person name="Yamada K."/>
            <person name="Lim J."/>
            <person name="Dale J.M."/>
            <person name="Chen H."/>
            <person name="Shinn P."/>
            <person name="Palm C.J."/>
            <person name="Southwick A.M."/>
            <person name="Wu H.C."/>
            <person name="Kim C.J."/>
            <person name="Nguyen M."/>
            <person name="Pham P.K."/>
            <person name="Cheuk R.F."/>
            <person name="Karlin-Newmann G."/>
            <person name="Liu S.X."/>
            <person name="Lam B."/>
            <person name="Sakano H."/>
            <person name="Wu T."/>
            <person name="Yu G."/>
            <person name="Miranda M."/>
            <person name="Quach H.L."/>
            <person name="Tripp M."/>
            <person name="Chang C.H."/>
            <person name="Lee J.M."/>
            <person name="Toriumi M.J."/>
            <person name="Chan M.M."/>
            <person name="Tang C.C."/>
            <person name="Onodera C.S."/>
            <person name="Deng J.M."/>
            <person name="Akiyama K."/>
            <person name="Ansari Y."/>
            <person name="Arakawa T."/>
            <person name="Banh J."/>
            <person name="Banno F."/>
            <person name="Bowser L."/>
            <person name="Brooks S.Y."/>
            <person name="Carninci P."/>
            <person name="Chao Q."/>
            <person name="Choy N."/>
            <person name="Enju A."/>
            <person name="Goldsmith A.D."/>
            <person name="Gurjal M."/>
            <person name="Hansen N.F."/>
            <person name="Hayashizaki Y."/>
            <person name="Johnson-Hopson C."/>
            <person name="Hsuan V.W."/>
            <person name="Iida K."/>
            <person name="Karnes M."/>
            <person name="Khan S."/>
            <person name="Koesema E."/>
            <person name="Ishida J."/>
            <person name="Jiang P.X."/>
            <person name="Jones T."/>
            <person name="Kawai J."/>
            <person name="Kamiya A."/>
            <person name="Meyers C."/>
            <person name="Nakajima M."/>
            <person name="Narusaka M."/>
            <person name="Seki M."/>
            <person name="Sakurai T."/>
            <person name="Satou M."/>
            <person name="Tamse R."/>
            <person name="Vaysberg M."/>
            <person name="Wallender E.K."/>
            <person name="Wong C."/>
            <person name="Yamamura Y."/>
            <person name="Yuan S."/>
            <person name="Shinozaki K."/>
            <person name="Davis R.W."/>
            <person name="Theologis A."/>
            <person name="Ecker J.R."/>
        </authorList>
    </citation>
    <scope>NUCLEOTIDE SEQUENCE [LARGE SCALE MRNA]</scope>
    <source>
        <strain>cv. Columbia</strain>
    </source>
</reference>
<reference key="5">
    <citation type="submission" date="2002-03" db="EMBL/GenBank/DDBJ databases">
        <title>Full-length cDNA from Arabidopsis thaliana.</title>
        <authorList>
            <person name="Brover V.V."/>
            <person name="Troukhan M.E."/>
            <person name="Alexandrov N.A."/>
            <person name="Lu Y.-P."/>
            <person name="Flavell R.B."/>
            <person name="Feldmann K.A."/>
        </authorList>
    </citation>
    <scope>NUCLEOTIDE SEQUENCE [LARGE SCALE MRNA]</scope>
</reference>
<reference key="6">
    <citation type="journal article" date="1999" name="Eur. J. Cell Biol.">
        <title>Mutations in the pilz group genes disrupt the microtubule cytoskeleton and uncouple cell cycle progression from cell division in Arabidopsis embryo and endosperm.</title>
        <authorList>
            <person name="Mayer U."/>
            <person name="Herzog U."/>
            <person name="Berger F."/>
            <person name="Inze D."/>
            <person name="Juergens G."/>
        </authorList>
    </citation>
    <scope>FUNCTION</scope>
</reference>
<reference key="7">
    <citation type="journal article" date="2000" name="Plant Cell">
        <title>The TITAN5 gene of Arabidopsis encodes a protein related to the ADP ribosylation factor family of GTP binding proteins.</title>
        <authorList>
            <person name="McElver J."/>
            <person name="Patton D."/>
            <person name="Rumbaugh M."/>
            <person name="Liu C."/>
            <person name="Yang L.J."/>
            <person name="Meinke D."/>
        </authorList>
    </citation>
    <scope>FUNCTION</scope>
    <scope>IDENTIFICATION</scope>
    <scope>DISRUPTION PHENOTYPE</scope>
    <scope>TISSUE SPECIFICITY</scope>
    <source>
        <strain>cv. Landsberg erecta</strain>
    </source>
</reference>